<name>XERC_BRUSU</name>
<protein>
    <recommendedName>
        <fullName evidence="1">Tyrosine recombinase XerC</fullName>
    </recommendedName>
</protein>
<evidence type="ECO:0000255" key="1">
    <source>
        <dbReference type="HAMAP-Rule" id="MF_01808"/>
    </source>
</evidence>
<evidence type="ECO:0000255" key="2">
    <source>
        <dbReference type="PROSITE-ProRule" id="PRU01246"/>
    </source>
</evidence>
<evidence type="ECO:0000255" key="3">
    <source>
        <dbReference type="PROSITE-ProRule" id="PRU01248"/>
    </source>
</evidence>
<organism>
    <name type="scientific">Brucella suis biovar 1 (strain 1330)</name>
    <dbReference type="NCBI Taxonomy" id="204722"/>
    <lineage>
        <taxon>Bacteria</taxon>
        <taxon>Pseudomonadati</taxon>
        <taxon>Pseudomonadota</taxon>
        <taxon>Alphaproteobacteria</taxon>
        <taxon>Hyphomicrobiales</taxon>
        <taxon>Brucellaceae</taxon>
        <taxon>Brucella/Ochrobactrum group</taxon>
        <taxon>Brucella</taxon>
    </lineage>
</organism>
<reference key="1">
    <citation type="journal article" date="2002" name="Proc. Natl. Acad. Sci. U.S.A.">
        <title>The Brucella suis genome reveals fundamental similarities between animal and plant pathogens and symbionts.</title>
        <authorList>
            <person name="Paulsen I.T."/>
            <person name="Seshadri R."/>
            <person name="Nelson K.E."/>
            <person name="Eisen J.A."/>
            <person name="Heidelberg J.F."/>
            <person name="Read T.D."/>
            <person name="Dodson R.J."/>
            <person name="Umayam L.A."/>
            <person name="Brinkac L.M."/>
            <person name="Beanan M.J."/>
            <person name="Daugherty S.C."/>
            <person name="DeBoy R.T."/>
            <person name="Durkin A.S."/>
            <person name="Kolonay J.F."/>
            <person name="Madupu R."/>
            <person name="Nelson W.C."/>
            <person name="Ayodeji B."/>
            <person name="Kraul M."/>
            <person name="Shetty J."/>
            <person name="Malek J.A."/>
            <person name="Van Aken S.E."/>
            <person name="Riedmuller S."/>
            <person name="Tettelin H."/>
            <person name="Gill S.R."/>
            <person name="White O."/>
            <person name="Salzberg S.L."/>
            <person name="Hoover D.L."/>
            <person name="Lindler L.E."/>
            <person name="Halling S.M."/>
            <person name="Boyle S.M."/>
            <person name="Fraser C.M."/>
        </authorList>
    </citation>
    <scope>NUCLEOTIDE SEQUENCE [LARGE SCALE GENOMIC DNA]</scope>
    <source>
        <strain>1330</strain>
    </source>
</reference>
<reference key="2">
    <citation type="journal article" date="2011" name="J. Bacteriol.">
        <title>Revised genome sequence of Brucella suis 1330.</title>
        <authorList>
            <person name="Tae H."/>
            <person name="Shallom S."/>
            <person name="Settlage R."/>
            <person name="Preston D."/>
            <person name="Adams L.G."/>
            <person name="Garner H.R."/>
        </authorList>
    </citation>
    <scope>NUCLEOTIDE SEQUENCE [LARGE SCALE GENOMIC DNA]</scope>
    <source>
        <strain>1330</strain>
    </source>
</reference>
<keyword id="KW-0131">Cell cycle</keyword>
<keyword id="KW-0132">Cell division</keyword>
<keyword id="KW-0159">Chromosome partition</keyword>
<keyword id="KW-0963">Cytoplasm</keyword>
<keyword id="KW-0229">DNA integration</keyword>
<keyword id="KW-0233">DNA recombination</keyword>
<keyword id="KW-0238">DNA-binding</keyword>
<sequence length="315" mass="34050">MATNSEFLIPARADLAAAREEWLKSLKTMRRLSDNTLIAYERDTRQFLQFLTGHLGEPPSLKEIGNLRIADLRSFLANRRNDGAGARTLGRGLAGVRSLLRHLEKRGLVNAAGASAMRAPRQPKSLPKPLTADDARRVVSADGQMAEEPWIAARNAAVLTLLYGCGLRISEALGLSGDALSDPSARSMTITGKGSKTRLVPLLPAVHKAVAQYRALCPFDLSAGQPLFRGAKGGPLHAAIIQREMQKLRAGLGLPDSATPHALRHSFATHLLGRGGDLRTIQELLGHASLSTTQVYTGVDTQRLLEVYDKTHPRA</sequence>
<comment type="function">
    <text evidence="1">Site-specific tyrosine recombinase, which acts by catalyzing the cutting and rejoining of the recombining DNA molecules. The XerC-XerD complex is essential to convert dimers of the bacterial chromosome into monomers to permit their segregation at cell division. It also contributes to the segregational stability of plasmids.</text>
</comment>
<comment type="subunit">
    <text evidence="1">Forms a cyclic heterotetrameric complex composed of two molecules of XerC and two molecules of XerD.</text>
</comment>
<comment type="subcellular location">
    <subcellularLocation>
        <location evidence="1">Cytoplasm</location>
    </subcellularLocation>
</comment>
<comment type="similarity">
    <text evidence="1">Belongs to the 'phage' integrase family. XerC subfamily.</text>
</comment>
<accession>Q7ZAN7</accession>
<accession>G0K859</accession>
<feature type="chain" id="PRO_0000095287" description="Tyrosine recombinase XerC">
    <location>
        <begin position="1"/>
        <end position="315"/>
    </location>
</feature>
<feature type="domain" description="Core-binding (CB)" evidence="3">
    <location>
        <begin position="13"/>
        <end position="104"/>
    </location>
</feature>
<feature type="domain" description="Tyr recombinase" evidence="2">
    <location>
        <begin position="125"/>
        <end position="309"/>
    </location>
</feature>
<feature type="active site" evidence="1">
    <location>
        <position position="168"/>
    </location>
</feature>
<feature type="active site" evidence="1">
    <location>
        <position position="193"/>
    </location>
</feature>
<feature type="active site" evidence="1">
    <location>
        <position position="261"/>
    </location>
</feature>
<feature type="active site" evidence="1">
    <location>
        <position position="264"/>
    </location>
</feature>
<feature type="active site" evidence="1">
    <location>
        <position position="287"/>
    </location>
</feature>
<feature type="active site" description="O-(3'-phospho-DNA)-tyrosine intermediate" evidence="1">
    <location>
        <position position="296"/>
    </location>
</feature>
<proteinExistence type="inferred from homology"/>
<gene>
    <name evidence="1" type="primary">xerC</name>
    <name type="ordered locus">BR1916</name>
    <name type="ordered locus">BS1330_I1910</name>
</gene>
<dbReference type="EMBL" id="AE014291">
    <property type="protein sequence ID" value="AAN30808.1"/>
    <property type="molecule type" value="Genomic_DNA"/>
</dbReference>
<dbReference type="EMBL" id="CP002997">
    <property type="protein sequence ID" value="AEM19225.1"/>
    <property type="molecule type" value="Genomic_DNA"/>
</dbReference>
<dbReference type="RefSeq" id="WP_002964984.1">
    <property type="nucleotide sequence ID" value="NZ_KN046804.1"/>
</dbReference>
<dbReference type="SMR" id="Q7ZAN7"/>
<dbReference type="KEGG" id="bms:BR1916"/>
<dbReference type="KEGG" id="bsi:BS1330_I1910"/>
<dbReference type="PATRIC" id="fig|204722.21.peg.2556"/>
<dbReference type="HOGENOM" id="CLU_027562_9_0_5"/>
<dbReference type="PhylomeDB" id="Q7ZAN7"/>
<dbReference type="Proteomes" id="UP000007104">
    <property type="component" value="Chromosome I"/>
</dbReference>
<dbReference type="GO" id="GO:0005737">
    <property type="term" value="C:cytoplasm"/>
    <property type="evidence" value="ECO:0007669"/>
    <property type="project" value="UniProtKB-SubCell"/>
</dbReference>
<dbReference type="GO" id="GO:0003677">
    <property type="term" value="F:DNA binding"/>
    <property type="evidence" value="ECO:0007669"/>
    <property type="project" value="UniProtKB-KW"/>
</dbReference>
<dbReference type="GO" id="GO:0009037">
    <property type="term" value="F:tyrosine-based site-specific recombinase activity"/>
    <property type="evidence" value="ECO:0007669"/>
    <property type="project" value="UniProtKB-UniRule"/>
</dbReference>
<dbReference type="GO" id="GO:0051301">
    <property type="term" value="P:cell division"/>
    <property type="evidence" value="ECO:0007669"/>
    <property type="project" value="UniProtKB-KW"/>
</dbReference>
<dbReference type="GO" id="GO:0007059">
    <property type="term" value="P:chromosome segregation"/>
    <property type="evidence" value="ECO:0007669"/>
    <property type="project" value="UniProtKB-UniRule"/>
</dbReference>
<dbReference type="GO" id="GO:0006313">
    <property type="term" value="P:DNA transposition"/>
    <property type="evidence" value="ECO:0007669"/>
    <property type="project" value="UniProtKB-UniRule"/>
</dbReference>
<dbReference type="Gene3D" id="1.10.150.130">
    <property type="match status" value="1"/>
</dbReference>
<dbReference type="Gene3D" id="1.10.443.10">
    <property type="entry name" value="Intergrase catalytic core"/>
    <property type="match status" value="1"/>
</dbReference>
<dbReference type="HAMAP" id="MF_01808">
    <property type="entry name" value="Recomb_XerC_XerD"/>
    <property type="match status" value="1"/>
</dbReference>
<dbReference type="InterPro" id="IPR044068">
    <property type="entry name" value="CB"/>
</dbReference>
<dbReference type="InterPro" id="IPR011010">
    <property type="entry name" value="DNA_brk_join_enz"/>
</dbReference>
<dbReference type="InterPro" id="IPR013762">
    <property type="entry name" value="Integrase-like_cat_sf"/>
</dbReference>
<dbReference type="InterPro" id="IPR002104">
    <property type="entry name" value="Integrase_catalytic"/>
</dbReference>
<dbReference type="InterPro" id="IPR010998">
    <property type="entry name" value="Integrase_recombinase_N"/>
</dbReference>
<dbReference type="InterPro" id="IPR004107">
    <property type="entry name" value="Integrase_SAM-like_N"/>
</dbReference>
<dbReference type="InterPro" id="IPR023009">
    <property type="entry name" value="Tyrosine_recombinase_XerC/XerD"/>
</dbReference>
<dbReference type="InterPro" id="IPR050090">
    <property type="entry name" value="Tyrosine_recombinase_XerCD"/>
</dbReference>
<dbReference type="PANTHER" id="PTHR30349">
    <property type="entry name" value="PHAGE INTEGRASE-RELATED"/>
    <property type="match status" value="1"/>
</dbReference>
<dbReference type="PANTHER" id="PTHR30349:SF90">
    <property type="entry name" value="TYROSINE RECOMBINASE XERD"/>
    <property type="match status" value="1"/>
</dbReference>
<dbReference type="Pfam" id="PF02899">
    <property type="entry name" value="Phage_int_SAM_1"/>
    <property type="match status" value="1"/>
</dbReference>
<dbReference type="Pfam" id="PF00589">
    <property type="entry name" value="Phage_integrase"/>
    <property type="match status" value="1"/>
</dbReference>
<dbReference type="SUPFAM" id="SSF56349">
    <property type="entry name" value="DNA breaking-rejoining enzymes"/>
    <property type="match status" value="1"/>
</dbReference>
<dbReference type="PROSITE" id="PS51900">
    <property type="entry name" value="CB"/>
    <property type="match status" value="1"/>
</dbReference>
<dbReference type="PROSITE" id="PS51898">
    <property type="entry name" value="TYR_RECOMBINASE"/>
    <property type="match status" value="1"/>
</dbReference>